<feature type="signal peptide" evidence="2">
    <location>
        <begin position="1"/>
        <end position="30"/>
    </location>
</feature>
<feature type="chain" id="PRO_0000007524" description="Multiple epidermal growth factor-like domains protein 6">
    <location>
        <begin position="31"/>
        <end position="1541"/>
    </location>
</feature>
<feature type="domain" description="EMI" evidence="4">
    <location>
        <begin position="44"/>
        <end position="125"/>
    </location>
</feature>
<feature type="domain" description="EGF-like 1" evidence="3">
    <location>
        <begin position="124"/>
        <end position="159"/>
    </location>
</feature>
<feature type="domain" description="EGF-like 2; calcium-binding" evidence="3">
    <location>
        <begin position="161"/>
        <end position="201"/>
    </location>
</feature>
<feature type="domain" description="EGF-like 3" evidence="3">
    <location>
        <begin position="206"/>
        <end position="242"/>
    </location>
</feature>
<feature type="domain" description="EGF-like 4" evidence="3">
    <location>
        <begin position="238"/>
        <end position="284"/>
    </location>
</feature>
<feature type="domain" description="EGF-like 5; calcium-binding" evidence="3">
    <location>
        <begin position="285"/>
        <end position="325"/>
    </location>
</feature>
<feature type="domain" description="EGF-like 6" evidence="3">
    <location>
        <begin position="335"/>
        <end position="370"/>
    </location>
</feature>
<feature type="domain" description="EGF-like 7" evidence="3">
    <location>
        <begin position="375"/>
        <end position="411"/>
    </location>
</feature>
<feature type="domain" description="EGF-like 8; calcium-binding" evidence="3">
    <location>
        <begin position="412"/>
        <end position="452"/>
    </location>
</feature>
<feature type="domain" description="EGF-like 9" evidence="3">
    <location>
        <begin position="516"/>
        <end position="552"/>
    </location>
</feature>
<feature type="domain" description="EGF-like 10" evidence="3">
    <location>
        <begin position="560"/>
        <end position="595"/>
    </location>
</feature>
<feature type="domain" description="EGF-like 11" evidence="3">
    <location>
        <begin position="603"/>
        <end position="638"/>
    </location>
</feature>
<feature type="domain" description="EGF-like 12" evidence="3">
    <location>
        <begin position="736"/>
        <end position="770"/>
    </location>
</feature>
<feature type="domain" description="EGF-like 13" evidence="3">
    <location>
        <begin position="783"/>
        <end position="814"/>
    </location>
</feature>
<feature type="domain" description="EGF-like 14" evidence="3">
    <location>
        <begin position="822"/>
        <end position="857"/>
    </location>
</feature>
<feature type="domain" description="EGF-like 15" evidence="3">
    <location>
        <begin position="865"/>
        <end position="901"/>
    </location>
</feature>
<feature type="domain" description="EGF-like 16" evidence="3">
    <location>
        <begin position="909"/>
        <end position="944"/>
    </location>
</feature>
<feature type="domain" description="EGF-like 17" evidence="3">
    <location>
        <begin position="955"/>
        <end position="987"/>
    </location>
</feature>
<feature type="domain" description="EGF-like 18" evidence="3">
    <location>
        <begin position="995"/>
        <end position="1030"/>
    </location>
</feature>
<feature type="domain" description="EGF-like 19" evidence="3">
    <location>
        <begin position="1038"/>
        <end position="1073"/>
    </location>
</feature>
<feature type="domain" description="EGF-like 20" evidence="3">
    <location>
        <begin position="1081"/>
        <end position="1116"/>
    </location>
</feature>
<feature type="domain" description="EGF-like 21" evidence="3">
    <location>
        <begin position="1124"/>
        <end position="1159"/>
    </location>
</feature>
<feature type="domain" description="EGF-like 22" evidence="3">
    <location>
        <begin position="1211"/>
        <end position="1246"/>
    </location>
</feature>
<feature type="domain" description="EGF-like 23" evidence="3">
    <location>
        <begin position="1254"/>
        <end position="1289"/>
    </location>
</feature>
<feature type="domain" description="EGF-like 24" evidence="3">
    <location>
        <begin position="1297"/>
        <end position="1332"/>
    </location>
</feature>
<feature type="domain" description="EGF-like 25" evidence="3">
    <location>
        <begin position="1345"/>
        <end position="1375"/>
    </location>
</feature>
<feature type="domain" description="EGF-like 26" evidence="3">
    <location>
        <begin position="1383"/>
        <end position="1418"/>
    </location>
</feature>
<feature type="domain" description="EGF-like 27" evidence="3">
    <location>
        <begin position="1469"/>
        <end position="1504"/>
    </location>
</feature>
<feature type="region of interest" description="Disordered" evidence="5">
    <location>
        <begin position="1509"/>
        <end position="1541"/>
    </location>
</feature>
<feature type="compositionally biased region" description="Polar residues" evidence="5">
    <location>
        <begin position="1516"/>
        <end position="1535"/>
    </location>
</feature>
<feature type="glycosylation site" description="N-linked (GlcNAc...) asparagine" evidence="2">
    <location>
        <position position="252"/>
    </location>
</feature>
<feature type="glycosylation site" description="N-linked (GlcNAc...) asparagine" evidence="2">
    <location>
        <position position="739"/>
    </location>
</feature>
<feature type="disulfide bond" evidence="2">
    <location>
        <begin position="48"/>
        <end position="111"/>
    </location>
</feature>
<feature type="disulfide bond" evidence="2">
    <location>
        <begin position="77"/>
        <end position="83"/>
    </location>
</feature>
<feature type="disulfide bond" evidence="2">
    <location>
        <begin position="110"/>
        <end position="123"/>
    </location>
</feature>
<feature type="disulfide bond" evidence="1">
    <location>
        <begin position="128"/>
        <end position="139"/>
    </location>
</feature>
<feature type="disulfide bond" evidence="1">
    <location>
        <begin position="133"/>
        <end position="147"/>
    </location>
</feature>
<feature type="disulfide bond" evidence="1">
    <location>
        <begin position="149"/>
        <end position="158"/>
    </location>
</feature>
<feature type="disulfide bond" evidence="1">
    <location>
        <begin position="165"/>
        <end position="176"/>
    </location>
</feature>
<feature type="disulfide bond" evidence="1">
    <location>
        <begin position="172"/>
        <end position="185"/>
    </location>
</feature>
<feature type="disulfide bond" evidence="1">
    <location>
        <begin position="187"/>
        <end position="200"/>
    </location>
</feature>
<feature type="disulfide bond" evidence="1">
    <location>
        <begin position="242"/>
        <end position="255"/>
    </location>
</feature>
<feature type="disulfide bond" evidence="1">
    <location>
        <begin position="248"/>
        <end position="268"/>
    </location>
</feature>
<feature type="disulfide bond" evidence="1">
    <location>
        <begin position="270"/>
        <end position="283"/>
    </location>
</feature>
<feature type="disulfide bond" evidence="1">
    <location>
        <begin position="289"/>
        <end position="300"/>
    </location>
</feature>
<feature type="disulfide bond" evidence="1">
    <location>
        <begin position="296"/>
        <end position="309"/>
    </location>
</feature>
<feature type="disulfide bond" evidence="1">
    <location>
        <begin position="311"/>
        <end position="324"/>
    </location>
</feature>
<feature type="disulfide bond" evidence="1">
    <location>
        <begin position="416"/>
        <end position="427"/>
    </location>
</feature>
<feature type="disulfide bond" evidence="1">
    <location>
        <begin position="423"/>
        <end position="436"/>
    </location>
</feature>
<feature type="disulfide bond" evidence="1">
    <location>
        <begin position="438"/>
        <end position="451"/>
    </location>
</feature>
<feature type="disulfide bond" evidence="1">
    <location>
        <begin position="520"/>
        <end position="533"/>
    </location>
</feature>
<feature type="disulfide bond" evidence="1">
    <location>
        <begin position="527"/>
        <end position="540"/>
    </location>
</feature>
<feature type="disulfide bond" evidence="1">
    <location>
        <begin position="542"/>
        <end position="551"/>
    </location>
</feature>
<feature type="disulfide bond" evidence="1">
    <location>
        <begin position="564"/>
        <end position="576"/>
    </location>
</feature>
<feature type="disulfide bond" evidence="1">
    <location>
        <begin position="570"/>
        <end position="583"/>
    </location>
</feature>
<feature type="disulfide bond" evidence="1">
    <location>
        <begin position="585"/>
        <end position="594"/>
    </location>
</feature>
<feature type="disulfide bond" evidence="1">
    <location>
        <begin position="607"/>
        <end position="619"/>
    </location>
</feature>
<feature type="disulfide bond" evidence="1">
    <location>
        <begin position="613"/>
        <end position="626"/>
    </location>
</feature>
<feature type="disulfide bond" evidence="1">
    <location>
        <begin position="628"/>
        <end position="637"/>
    </location>
</feature>
<feature type="disulfide bond" evidence="1">
    <location>
        <begin position="740"/>
        <end position="751"/>
    </location>
</feature>
<feature type="disulfide bond" evidence="1">
    <location>
        <begin position="744"/>
        <end position="758"/>
    </location>
</feature>
<feature type="disulfide bond" evidence="1">
    <location>
        <begin position="760"/>
        <end position="769"/>
    </location>
</feature>
<feature type="disulfide bond" evidence="1">
    <location>
        <begin position="786"/>
        <end position="795"/>
    </location>
</feature>
<feature type="disulfide bond" evidence="1">
    <location>
        <begin position="789"/>
        <end position="802"/>
    </location>
</feature>
<feature type="disulfide bond" evidence="1">
    <location>
        <begin position="804"/>
        <end position="813"/>
    </location>
</feature>
<feature type="disulfide bond" evidence="1">
    <location>
        <begin position="826"/>
        <end position="838"/>
    </location>
</feature>
<feature type="disulfide bond" evidence="1">
    <location>
        <begin position="832"/>
        <end position="845"/>
    </location>
</feature>
<feature type="disulfide bond" evidence="1">
    <location>
        <begin position="847"/>
        <end position="856"/>
    </location>
</feature>
<feature type="disulfide bond" evidence="1">
    <location>
        <begin position="869"/>
        <end position="882"/>
    </location>
</feature>
<feature type="disulfide bond" evidence="1">
    <location>
        <begin position="873"/>
        <end position="889"/>
    </location>
</feature>
<feature type="disulfide bond" evidence="1">
    <location>
        <begin position="891"/>
        <end position="900"/>
    </location>
</feature>
<feature type="disulfide bond" evidence="1">
    <location>
        <begin position="913"/>
        <end position="925"/>
    </location>
</feature>
<feature type="disulfide bond" evidence="1">
    <location>
        <begin position="919"/>
        <end position="932"/>
    </location>
</feature>
<feature type="disulfide bond" evidence="1">
    <location>
        <begin position="934"/>
        <end position="943"/>
    </location>
</feature>
<feature type="disulfide bond" evidence="1">
    <location>
        <begin position="999"/>
        <end position="1011"/>
    </location>
</feature>
<feature type="disulfide bond" evidence="1">
    <location>
        <begin position="1005"/>
        <end position="1018"/>
    </location>
</feature>
<feature type="disulfide bond" evidence="1">
    <location>
        <begin position="1020"/>
        <end position="1029"/>
    </location>
</feature>
<feature type="disulfide bond" evidence="1">
    <location>
        <begin position="1042"/>
        <end position="1054"/>
    </location>
</feature>
<feature type="disulfide bond" evidence="1">
    <location>
        <begin position="1048"/>
        <end position="1061"/>
    </location>
</feature>
<feature type="disulfide bond" evidence="1">
    <location>
        <begin position="1063"/>
        <end position="1072"/>
    </location>
</feature>
<feature type="disulfide bond" evidence="1">
    <location>
        <begin position="1085"/>
        <end position="1097"/>
    </location>
</feature>
<feature type="disulfide bond" evidence="1">
    <location>
        <begin position="1091"/>
        <end position="1104"/>
    </location>
</feature>
<feature type="disulfide bond" evidence="1">
    <location>
        <begin position="1106"/>
        <end position="1115"/>
    </location>
</feature>
<feature type="disulfide bond" evidence="1">
    <location>
        <begin position="1128"/>
        <end position="1140"/>
    </location>
</feature>
<feature type="disulfide bond" evidence="1">
    <location>
        <begin position="1134"/>
        <end position="1147"/>
    </location>
</feature>
<feature type="disulfide bond" evidence="1">
    <location>
        <begin position="1149"/>
        <end position="1158"/>
    </location>
</feature>
<feature type="disulfide bond" evidence="1">
    <location>
        <begin position="1215"/>
        <end position="1227"/>
    </location>
</feature>
<feature type="disulfide bond" evidence="1">
    <location>
        <begin position="1221"/>
        <end position="1234"/>
    </location>
</feature>
<feature type="disulfide bond" evidence="1">
    <location>
        <begin position="1236"/>
        <end position="1245"/>
    </location>
</feature>
<feature type="disulfide bond" evidence="1">
    <location>
        <begin position="1258"/>
        <end position="1270"/>
    </location>
</feature>
<feature type="disulfide bond" evidence="1">
    <location>
        <begin position="1264"/>
        <end position="1277"/>
    </location>
</feature>
<feature type="disulfide bond" evidence="1">
    <location>
        <begin position="1279"/>
        <end position="1288"/>
    </location>
</feature>
<feature type="disulfide bond" evidence="1">
    <location>
        <begin position="1301"/>
        <end position="1313"/>
    </location>
</feature>
<feature type="disulfide bond" evidence="1">
    <location>
        <begin position="1307"/>
        <end position="1320"/>
    </location>
</feature>
<feature type="disulfide bond" evidence="1">
    <location>
        <begin position="1322"/>
        <end position="1331"/>
    </location>
</feature>
<feature type="disulfide bond" evidence="1">
    <location>
        <begin position="1348"/>
        <end position="1356"/>
    </location>
</feature>
<feature type="disulfide bond" evidence="1">
    <location>
        <begin position="1350"/>
        <end position="1363"/>
    </location>
</feature>
<feature type="disulfide bond" evidence="1">
    <location>
        <begin position="1365"/>
        <end position="1374"/>
    </location>
</feature>
<feature type="disulfide bond" evidence="1">
    <location>
        <begin position="1387"/>
        <end position="1399"/>
    </location>
</feature>
<feature type="disulfide bond" evidence="1">
    <location>
        <begin position="1393"/>
        <end position="1406"/>
    </location>
</feature>
<feature type="disulfide bond" evidence="1">
    <location>
        <begin position="1408"/>
        <end position="1417"/>
    </location>
</feature>
<feature type="disulfide bond" evidence="1">
    <location>
        <begin position="1473"/>
        <end position="1485"/>
    </location>
</feature>
<feature type="disulfide bond" evidence="1">
    <location>
        <begin position="1479"/>
        <end position="1492"/>
    </location>
</feature>
<feature type="disulfide bond" evidence="1">
    <location>
        <begin position="1494"/>
        <end position="1503"/>
    </location>
</feature>
<feature type="splice variant" id="VSP_037740" description="In isoform 2." evidence="7">
    <location>
        <begin position="1"/>
        <end position="159"/>
    </location>
</feature>
<feature type="splice variant" id="VSP_037741" description="In isoform 2." evidence="7">
    <original>Y</original>
    <variation>MGASRDRGLAALWCLGLLGGLARVAGTHYRYLWRGCYPCHLGQAGYPVSAGDQRP</variation>
    <location>
        <position position="160"/>
    </location>
</feature>
<feature type="splice variant" id="VSP_037742" description="In isoform 2." evidence="7">
    <original>TCPAHTYGHNCSQACACFNGASCDPVHGQCHCAPGWMGPSCLQACPAGLYGDNCRHSCLCQNGGTCDPVSGHCACPEGWAGLACEKE</original>
    <variation>K</variation>
    <location>
        <begin position="989"/>
        <end position="1075"/>
    </location>
</feature>
<feature type="splice variant" id="VSP_037743" description="In isoform 2." evidence="7">
    <original>ACPPGSFGEDCAQMCQCPGENPACHPATGTCSCAAGYHGPSCQQR</original>
    <variation>G</variation>
    <location>
        <begin position="1161"/>
        <end position="1205"/>
    </location>
</feature>
<feature type="splice variant" id="VSP_037744" description="In isoform 2." evidence="7">
    <original>PCPPGFHGAGCQGLCWCQHGAPCDPISGRCLCPAGFHGHFCERGCEPGSFGEGCHQRCDCDGGAPCDPVTGLCLCPPG</original>
    <variation>R</variation>
    <location>
        <begin position="1377"/>
        <end position="1454"/>
    </location>
</feature>
<feature type="sequence variant" id="VAR_059258" description="In dbSNP:rs7513275.">
    <original>M</original>
    <variation>T</variation>
    <location>
        <position position="115"/>
    </location>
</feature>
<feature type="sequence variant" id="VAR_058361" description="In dbSNP:rs2794340." evidence="6">
    <original>S</original>
    <variation>G</variation>
    <location>
        <position position="131"/>
    </location>
</feature>
<feature type="sequence variant" id="VAR_059259" description="In dbSNP:rs11585362.">
    <original>A</original>
    <variation>V</variation>
    <location>
        <position position="313"/>
    </location>
</feature>
<feature type="sequence variant" id="VAR_061155" description="In dbSNP:rs947345.">
    <original>P</original>
    <variation>L</variation>
    <location>
        <position position="587"/>
    </location>
</feature>
<feature type="sequence variant" id="VAR_059260" description="In dbSNP:rs2821008.">
    <original>L</original>
    <variation>P</variation>
    <location>
        <position position="688"/>
    </location>
</feature>
<feature type="sequence variant" id="VAR_058362" description="In dbSNP:rs7553399." evidence="6">
    <original>R</original>
    <variation>L</variation>
    <location>
        <position position="916"/>
    </location>
</feature>
<feature type="sequence variant" id="VAR_058363" description="In dbSNP:rs4648506." evidence="6">
    <original>G</original>
    <variation>A</variation>
    <location>
        <position position="1137"/>
    </location>
</feature>
<feature type="sequence variant" id="VAR_061156" description="In dbSNP:rs57804877.">
    <original>R</original>
    <variation>H</variation>
    <location>
        <position position="1287"/>
    </location>
</feature>
<feature type="sequence variant" id="VAR_061157" description="In dbSNP:rs57484147.">
    <original>G</original>
    <variation>S</variation>
    <location>
        <position position="1536"/>
    </location>
</feature>
<name>MEGF6_HUMAN</name>
<reference key="1">
    <citation type="journal article" date="1998" name="Genomics">
        <title>Identification of high-molecular-weight proteins with multiple EGF-like motifs by motif-trap screening.</title>
        <authorList>
            <person name="Nakayama M."/>
            <person name="Nakajima D."/>
            <person name="Nagase T."/>
            <person name="Nomura N."/>
            <person name="Seki N."/>
            <person name="Ohara O."/>
        </authorList>
    </citation>
    <scope>NUCLEOTIDE SEQUENCE [MRNA] (ISOFORMS 1 AND 2)</scope>
    <scope>VARIANTS GLY-131; LEU-916 AND ALA-1137</scope>
    <source>
        <tissue>Brain</tissue>
        <tissue>Spleen</tissue>
    </source>
</reference>
<reference key="2">
    <citation type="journal article" date="2002" name="DNA Res.">
        <title>Construction of expression-ready cDNA clones for KIAA genes: manual curation of 330 KIAA cDNA clones.</title>
        <authorList>
            <person name="Nakajima D."/>
            <person name="Okazaki N."/>
            <person name="Yamakawa H."/>
            <person name="Kikuno R."/>
            <person name="Ohara O."/>
            <person name="Nagase T."/>
        </authorList>
    </citation>
    <scope>SEQUENCE REVISION</scope>
</reference>
<reference key="3">
    <citation type="journal article" date="2006" name="Nature">
        <title>The DNA sequence and biological annotation of human chromosome 1.</title>
        <authorList>
            <person name="Gregory S.G."/>
            <person name="Barlow K.F."/>
            <person name="McLay K.E."/>
            <person name="Kaul R."/>
            <person name="Swarbreck D."/>
            <person name="Dunham A."/>
            <person name="Scott C.E."/>
            <person name="Howe K.L."/>
            <person name="Woodfine K."/>
            <person name="Spencer C.C.A."/>
            <person name="Jones M.C."/>
            <person name="Gillson C."/>
            <person name="Searle S."/>
            <person name="Zhou Y."/>
            <person name="Kokocinski F."/>
            <person name="McDonald L."/>
            <person name="Evans R."/>
            <person name="Phillips K."/>
            <person name="Atkinson A."/>
            <person name="Cooper R."/>
            <person name="Jones C."/>
            <person name="Hall R.E."/>
            <person name="Andrews T.D."/>
            <person name="Lloyd C."/>
            <person name="Ainscough R."/>
            <person name="Almeida J.P."/>
            <person name="Ambrose K.D."/>
            <person name="Anderson F."/>
            <person name="Andrew R.W."/>
            <person name="Ashwell R.I.S."/>
            <person name="Aubin K."/>
            <person name="Babbage A.K."/>
            <person name="Bagguley C.L."/>
            <person name="Bailey J."/>
            <person name="Beasley H."/>
            <person name="Bethel G."/>
            <person name="Bird C.P."/>
            <person name="Bray-Allen S."/>
            <person name="Brown J.Y."/>
            <person name="Brown A.J."/>
            <person name="Buckley D."/>
            <person name="Burton J."/>
            <person name="Bye J."/>
            <person name="Carder C."/>
            <person name="Chapman J.C."/>
            <person name="Clark S.Y."/>
            <person name="Clarke G."/>
            <person name="Clee C."/>
            <person name="Cobley V."/>
            <person name="Collier R.E."/>
            <person name="Corby N."/>
            <person name="Coville G.J."/>
            <person name="Davies J."/>
            <person name="Deadman R."/>
            <person name="Dunn M."/>
            <person name="Earthrowl M."/>
            <person name="Ellington A.G."/>
            <person name="Errington H."/>
            <person name="Frankish A."/>
            <person name="Frankland J."/>
            <person name="French L."/>
            <person name="Garner P."/>
            <person name="Garnett J."/>
            <person name="Gay L."/>
            <person name="Ghori M.R.J."/>
            <person name="Gibson R."/>
            <person name="Gilby L.M."/>
            <person name="Gillett W."/>
            <person name="Glithero R.J."/>
            <person name="Grafham D.V."/>
            <person name="Griffiths C."/>
            <person name="Griffiths-Jones S."/>
            <person name="Grocock R."/>
            <person name="Hammond S."/>
            <person name="Harrison E.S.I."/>
            <person name="Hart E."/>
            <person name="Haugen E."/>
            <person name="Heath P.D."/>
            <person name="Holmes S."/>
            <person name="Holt K."/>
            <person name="Howden P.J."/>
            <person name="Hunt A.R."/>
            <person name="Hunt S.E."/>
            <person name="Hunter G."/>
            <person name="Isherwood J."/>
            <person name="James R."/>
            <person name="Johnson C."/>
            <person name="Johnson D."/>
            <person name="Joy A."/>
            <person name="Kay M."/>
            <person name="Kershaw J.K."/>
            <person name="Kibukawa M."/>
            <person name="Kimberley A.M."/>
            <person name="King A."/>
            <person name="Knights A.J."/>
            <person name="Lad H."/>
            <person name="Laird G."/>
            <person name="Lawlor S."/>
            <person name="Leongamornlert D.A."/>
            <person name="Lloyd D.M."/>
            <person name="Loveland J."/>
            <person name="Lovell J."/>
            <person name="Lush M.J."/>
            <person name="Lyne R."/>
            <person name="Martin S."/>
            <person name="Mashreghi-Mohammadi M."/>
            <person name="Matthews L."/>
            <person name="Matthews N.S.W."/>
            <person name="McLaren S."/>
            <person name="Milne S."/>
            <person name="Mistry S."/>
            <person name="Moore M.J.F."/>
            <person name="Nickerson T."/>
            <person name="O'Dell C.N."/>
            <person name="Oliver K."/>
            <person name="Palmeiri A."/>
            <person name="Palmer S.A."/>
            <person name="Parker A."/>
            <person name="Patel D."/>
            <person name="Pearce A.V."/>
            <person name="Peck A.I."/>
            <person name="Pelan S."/>
            <person name="Phelps K."/>
            <person name="Phillimore B.J."/>
            <person name="Plumb R."/>
            <person name="Rajan J."/>
            <person name="Raymond C."/>
            <person name="Rouse G."/>
            <person name="Saenphimmachak C."/>
            <person name="Sehra H.K."/>
            <person name="Sheridan E."/>
            <person name="Shownkeen R."/>
            <person name="Sims S."/>
            <person name="Skuce C.D."/>
            <person name="Smith M."/>
            <person name="Steward C."/>
            <person name="Subramanian S."/>
            <person name="Sycamore N."/>
            <person name="Tracey A."/>
            <person name="Tromans A."/>
            <person name="Van Helmond Z."/>
            <person name="Wall M."/>
            <person name="Wallis J.M."/>
            <person name="White S."/>
            <person name="Whitehead S.L."/>
            <person name="Wilkinson J.E."/>
            <person name="Willey D.L."/>
            <person name="Williams H."/>
            <person name="Wilming L."/>
            <person name="Wray P.W."/>
            <person name="Wu Z."/>
            <person name="Coulson A."/>
            <person name="Vaudin M."/>
            <person name="Sulston J.E."/>
            <person name="Durbin R.M."/>
            <person name="Hubbard T."/>
            <person name="Wooster R."/>
            <person name="Dunham I."/>
            <person name="Carter N.P."/>
            <person name="McVean G."/>
            <person name="Ross M.T."/>
            <person name="Harrow J."/>
            <person name="Olson M.V."/>
            <person name="Beck S."/>
            <person name="Rogers J."/>
            <person name="Bentley D.R."/>
        </authorList>
    </citation>
    <scope>NUCLEOTIDE SEQUENCE [LARGE SCALE GENOMIC DNA]</scope>
</reference>
<evidence type="ECO:0000250" key="1"/>
<evidence type="ECO:0000255" key="2"/>
<evidence type="ECO:0000255" key="3">
    <source>
        <dbReference type="PROSITE-ProRule" id="PRU00076"/>
    </source>
</evidence>
<evidence type="ECO:0000255" key="4">
    <source>
        <dbReference type="PROSITE-ProRule" id="PRU00384"/>
    </source>
</evidence>
<evidence type="ECO:0000256" key="5">
    <source>
        <dbReference type="SAM" id="MobiDB-lite"/>
    </source>
</evidence>
<evidence type="ECO:0000269" key="6">
    <source>
    </source>
</evidence>
<evidence type="ECO:0000303" key="7">
    <source>
    </source>
</evidence>
<evidence type="ECO:0000305" key="8"/>
<sequence length="1541" mass="161185">MSFLEEARAAGRAVVLALVLLLLPAVPVGASVPPRPLLPLQPGMPHVCAEQELTLVGRRQPCVQALSHTVPVWKAGCGWQAWCVGHERRTVYYMGYRQVYTTEARTVLRCCRGWMQQPDEEGCLSAECSASLCFHGGRCVPGSAQPCHCPPGFQGPRCQYDVDECRTHNGGCQHRCVNTPGSYLCECKPGFRLHTDSRTCLAINSCALGNGGCQHHCVQLTITRHRCQCRPGFQLQEDGRHCVRRSPCANRNGSCMHRCQVVRGLARCECHVGYQLAADGKACEDVDECAAGLAQCAHGCLNTQGSFKCVCHAGYELGADGRQCYRIEMEIVNSCEANNGGCSHGCSHTSAGPLCTCPRGYELDTDQRTCIDVDDCADSPCCQQVCTNNPGGYECGCYAGYRLSADGCGCEDVDECASSRGGCEHHCTNLAGSFQCSCEAGYRLHEDRRGCSPLEEPMVDLDGELPFVRPLPHIAVLQDELPQLFQDDDVGADEEEAELRGEHTLTEKFVCLDDSFGHDCSLTCDDCRNGGTCLLGLDGCDCPEGWTGLICNETCPPDTFGKNCSFSCSCQNGGTCDSVTGACRCPPGVSGTNCEDGCPKGYYGKHCRKKCNCANRGRCHRLYGACLCDPGLYGRFCHLTCPPWAFGPGCSEECQCVQPHTQSCDKRDGSCSCKAGFRGERCQAECELGYFGPGCWQACTCPVGVACDSVSGECGKRCPAGFQGEDCGQECPVGTFGVNCSSSCSCGGAPCHGVTGQCRCPPGRTGEDCEADCPEGRWGLGCQEICPACQHAARCDPETGACLCLPGFVGSRCQDVCPAGWYGPSCQTRCSCANDGHCHPATGHCSCAPGWTGFSCQRACDTGHWGPDCSHPCNCSAGHGSCDAISGLCLCEAGYVGPRCEQQCPQGHFGPGCEQRCQCQHGAACDHVSGACTCPAGWRGTFCEHACPAGFFGLDCRSACNCTAGAACDAVNGSCLCPAGRRGPRCAETCPAHTYGHNCSQACACFNGASCDPVHGQCHCAPGWMGPSCLQACPAGLYGDNCRHSCLCQNGGTCDPVSGHCACPEGWAGLACEKECLPRDVRAGCRHSGGCLNGGLCDPHTGRCLCPAGWTGDKCQSPCLRGWFGEACAQRCSCPPGAACHHVTGACRCPPGFTGSGCEQACPPGSFGEDCAQMCQCPGENPACHPATGTCSCAAGYHGPSCQQRCPPGRYGPGCEQLCGCLNGGSCDAATGACRCPTGFLGTDCNLTCPQGRFGPNCTHVCGCGQGAACDPVTGTCLCPPGRAGVRCERGCPQNRFGVGCEHTCSCRNGGLCHASNGSCSCGLGWTGRHCELACPPGRYGAACHLECSCHNNSTCEPATGTCRCGPGFYGQACEHPCPPGFHGAGCQGLCWCQHGAPCDPISGRCLCPAGFHGHFCERGCEPGSFGEGCHQRCDCDGGAPCDPVTGLCLCPPGRSGATCNLDCRRGQFGPSCTLHCDCGGGADCDPVSGQCHCVDGYMGPTCREGGPLRLPENPSLAQGSAGTLPASSRPTSRSGGPARH</sequence>
<organism>
    <name type="scientific">Homo sapiens</name>
    <name type="common">Human</name>
    <dbReference type="NCBI Taxonomy" id="9606"/>
    <lineage>
        <taxon>Eukaryota</taxon>
        <taxon>Metazoa</taxon>
        <taxon>Chordata</taxon>
        <taxon>Craniata</taxon>
        <taxon>Vertebrata</taxon>
        <taxon>Euteleostomi</taxon>
        <taxon>Mammalia</taxon>
        <taxon>Eutheria</taxon>
        <taxon>Euarchontoglires</taxon>
        <taxon>Primates</taxon>
        <taxon>Haplorrhini</taxon>
        <taxon>Catarrhini</taxon>
        <taxon>Hominidae</taxon>
        <taxon>Homo</taxon>
    </lineage>
</organism>
<keyword id="KW-0025">Alternative splicing</keyword>
<keyword id="KW-0106">Calcium</keyword>
<keyword id="KW-1015">Disulfide bond</keyword>
<keyword id="KW-0245">EGF-like domain</keyword>
<keyword id="KW-0325">Glycoprotein</keyword>
<keyword id="KW-1267">Proteomics identification</keyword>
<keyword id="KW-1185">Reference proteome</keyword>
<keyword id="KW-0677">Repeat</keyword>
<keyword id="KW-0964">Secreted</keyword>
<keyword id="KW-0732">Signal</keyword>
<accession>O75095</accession>
<accession>Q4AC86</accession>
<accession>Q5VV39</accession>
<protein>
    <recommendedName>
        <fullName>Multiple epidermal growth factor-like domains protein 6</fullName>
        <shortName>Multiple EGF-like domains protein 6</shortName>
    </recommendedName>
    <alternativeName>
        <fullName>Epidermal growth factor-like protein 3</fullName>
        <shortName>EGF-like protein 3</shortName>
    </alternativeName>
</protein>
<proteinExistence type="evidence at protein level"/>
<dbReference type="EMBL" id="AB011539">
    <property type="protein sequence ID" value="BAA32467.2"/>
    <property type="status" value="ALT_INIT"/>
    <property type="molecule type" value="mRNA"/>
</dbReference>
<dbReference type="EMBL" id="AB231860">
    <property type="protein sequence ID" value="BAE19678.1"/>
    <property type="status" value="ALT_SEQ"/>
    <property type="molecule type" value="mRNA"/>
</dbReference>
<dbReference type="EMBL" id="AL512413">
    <property type="status" value="NOT_ANNOTATED_CDS"/>
    <property type="molecule type" value="Genomic_DNA"/>
</dbReference>
<dbReference type="EMBL" id="AL513320">
    <property type="status" value="NOT_ANNOTATED_CDS"/>
    <property type="molecule type" value="Genomic_DNA"/>
</dbReference>
<dbReference type="CCDS" id="CCDS41237.1">
    <molecule id="O75095-1"/>
</dbReference>
<dbReference type="RefSeq" id="NP_001400.3">
    <molecule id="O75095-1"/>
    <property type="nucleotide sequence ID" value="NM_001409.4"/>
</dbReference>
<dbReference type="BioGRID" id="108273">
    <property type="interactions" value="15"/>
</dbReference>
<dbReference type="IntAct" id="O75095">
    <property type="interactions" value="11"/>
</dbReference>
<dbReference type="MINT" id="O75095"/>
<dbReference type="STRING" id="9606.ENSP00000348982"/>
<dbReference type="GlyCosmos" id="O75095">
    <property type="glycosylation" value="3 sites, 1 glycan"/>
</dbReference>
<dbReference type="GlyGen" id="O75095">
    <property type="glycosylation" value="5 sites, 3 N-linked glycans (2 sites), 1 O-linked glycan (1 site)"/>
</dbReference>
<dbReference type="iPTMnet" id="O75095"/>
<dbReference type="PhosphoSitePlus" id="O75095"/>
<dbReference type="BioMuta" id="MEGF6"/>
<dbReference type="jPOST" id="O75095"/>
<dbReference type="MassIVE" id="O75095"/>
<dbReference type="PaxDb" id="9606-ENSP00000348982"/>
<dbReference type="PeptideAtlas" id="O75095"/>
<dbReference type="ProteomicsDB" id="49758">
    <molecule id="O75095-1"/>
</dbReference>
<dbReference type="ProteomicsDB" id="49759">
    <molecule id="O75095-2"/>
</dbReference>
<dbReference type="Antibodypedia" id="59969">
    <property type="antibodies" value="25 antibodies from 12 providers"/>
</dbReference>
<dbReference type="DNASU" id="1953"/>
<dbReference type="Ensembl" id="ENST00000294599.8">
    <molecule id="O75095-2"/>
    <property type="protein sequence ID" value="ENSP00000294599.4"/>
    <property type="gene ID" value="ENSG00000162591.17"/>
</dbReference>
<dbReference type="Ensembl" id="ENST00000356575.9">
    <molecule id="O75095-1"/>
    <property type="protein sequence ID" value="ENSP00000348982.4"/>
    <property type="gene ID" value="ENSG00000162591.17"/>
</dbReference>
<dbReference type="GeneID" id="1953"/>
<dbReference type="KEGG" id="hsa:1953"/>
<dbReference type="MANE-Select" id="ENST00000356575.9">
    <property type="protein sequence ID" value="ENSP00000348982.4"/>
    <property type="RefSeq nucleotide sequence ID" value="NM_001409.4"/>
    <property type="RefSeq protein sequence ID" value="NP_001400.3"/>
</dbReference>
<dbReference type="UCSC" id="uc001akk.4">
    <molecule id="O75095-1"/>
    <property type="organism name" value="human"/>
</dbReference>
<dbReference type="AGR" id="HGNC:3232"/>
<dbReference type="CTD" id="1953"/>
<dbReference type="DisGeNET" id="1953"/>
<dbReference type="GeneCards" id="MEGF6"/>
<dbReference type="HGNC" id="HGNC:3232">
    <property type="gene designation" value="MEGF6"/>
</dbReference>
<dbReference type="HPA" id="ENSG00000162591">
    <property type="expression patterns" value="Low tissue specificity"/>
</dbReference>
<dbReference type="MIM" id="604266">
    <property type="type" value="gene"/>
</dbReference>
<dbReference type="neXtProt" id="NX_O75095"/>
<dbReference type="OpenTargets" id="ENSG00000162591"/>
<dbReference type="PharmGKB" id="PA27665"/>
<dbReference type="VEuPathDB" id="HostDB:ENSG00000162591"/>
<dbReference type="eggNOG" id="KOG1218">
    <property type="taxonomic scope" value="Eukaryota"/>
</dbReference>
<dbReference type="GeneTree" id="ENSGT00940000156971"/>
<dbReference type="HOGENOM" id="CLU_004998_0_0_1"/>
<dbReference type="InParanoid" id="O75095"/>
<dbReference type="OMA" id="HLCEHCP"/>
<dbReference type="OrthoDB" id="409374at2759"/>
<dbReference type="PAN-GO" id="O75095">
    <property type="GO annotations" value="0 GO annotations based on evolutionary models"/>
</dbReference>
<dbReference type="PhylomeDB" id="O75095"/>
<dbReference type="TreeFam" id="TF332598"/>
<dbReference type="PathwayCommons" id="O75095"/>
<dbReference type="SignaLink" id="O75095"/>
<dbReference type="BioGRID-ORCS" id="1953">
    <property type="hits" value="10 hits in 1144 CRISPR screens"/>
</dbReference>
<dbReference type="ChiTaRS" id="MEGF6">
    <property type="organism name" value="human"/>
</dbReference>
<dbReference type="GenomeRNAi" id="1953"/>
<dbReference type="Pharos" id="O75095">
    <property type="development level" value="Tdark"/>
</dbReference>
<dbReference type="PRO" id="PR:O75095"/>
<dbReference type="Proteomes" id="UP000005640">
    <property type="component" value="Chromosome 1"/>
</dbReference>
<dbReference type="RNAct" id="O75095">
    <property type="molecule type" value="protein"/>
</dbReference>
<dbReference type="Bgee" id="ENSG00000162591">
    <property type="expression patterns" value="Expressed in right coronary artery and 132 other cell types or tissues"/>
</dbReference>
<dbReference type="ExpressionAtlas" id="O75095">
    <property type="expression patterns" value="baseline and differential"/>
</dbReference>
<dbReference type="GO" id="GO:0005576">
    <property type="term" value="C:extracellular region"/>
    <property type="evidence" value="ECO:0007669"/>
    <property type="project" value="UniProtKB-SubCell"/>
</dbReference>
<dbReference type="GO" id="GO:0005509">
    <property type="term" value="F:calcium ion binding"/>
    <property type="evidence" value="ECO:0007669"/>
    <property type="project" value="InterPro"/>
</dbReference>
<dbReference type="FunFam" id="2.10.25.10:FF:000326">
    <property type="entry name" value="Multiple EGF like domains 6"/>
    <property type="match status" value="1"/>
</dbReference>
<dbReference type="FunFam" id="2.170.300.10:FF:000002">
    <property type="entry name" value="Multiple epidermal growth factor-like domains 10"/>
    <property type="match status" value="3"/>
</dbReference>
<dbReference type="FunFam" id="2.10.25.10:FF:000306">
    <property type="entry name" value="Multiple epidermal growth factor-like domains 6"/>
    <property type="match status" value="1"/>
</dbReference>
<dbReference type="FunFam" id="2.10.25.10:FF:000772">
    <property type="entry name" value="Multiple epidermal growth factor-like domains 6"/>
    <property type="match status" value="1"/>
</dbReference>
<dbReference type="FunFam" id="2.170.300.10:FF:000027">
    <property type="entry name" value="Multiple epidermal growth factor-like domains 6"/>
    <property type="match status" value="2"/>
</dbReference>
<dbReference type="FunFam" id="2.10.25.10:FF:001129">
    <property type="entry name" value="Predicted protein"/>
    <property type="match status" value="1"/>
</dbReference>
<dbReference type="FunFam" id="2.10.25.10:FF:000028">
    <property type="entry name" value="Signal peptide, CUB domain and EGF-like domain-containing 2"/>
    <property type="match status" value="1"/>
</dbReference>
<dbReference type="FunFam" id="2.10.25.10:FF:000037">
    <property type="entry name" value="Signal peptide, CUB domain and EGF-like domain-containing 2"/>
    <property type="match status" value="2"/>
</dbReference>
<dbReference type="FunFam" id="2.170.300.10:FF:000041">
    <property type="entry name" value="Tyrosine protein kinase receptor tie-1, putative"/>
    <property type="match status" value="2"/>
</dbReference>
<dbReference type="Gene3D" id="2.10.25.10">
    <property type="entry name" value="Laminin"/>
    <property type="match status" value="10"/>
</dbReference>
<dbReference type="Gene3D" id="2.170.300.10">
    <property type="entry name" value="Tie2 ligand-binding domain superfamily"/>
    <property type="match status" value="7"/>
</dbReference>
<dbReference type="InterPro" id="IPR026823">
    <property type="entry name" value="cEGF"/>
</dbReference>
<dbReference type="InterPro" id="IPR001881">
    <property type="entry name" value="EGF-like_Ca-bd_dom"/>
</dbReference>
<dbReference type="InterPro" id="IPR000742">
    <property type="entry name" value="EGF-like_dom"/>
</dbReference>
<dbReference type="InterPro" id="IPR000152">
    <property type="entry name" value="EGF-type_Asp/Asn_hydroxyl_site"/>
</dbReference>
<dbReference type="InterPro" id="IPR018097">
    <property type="entry name" value="EGF_Ca-bd_CS"/>
</dbReference>
<dbReference type="InterPro" id="IPR011489">
    <property type="entry name" value="EMI_domain"/>
</dbReference>
<dbReference type="InterPro" id="IPR009030">
    <property type="entry name" value="Growth_fac_rcpt_cys_sf"/>
</dbReference>
<dbReference type="InterPro" id="IPR002049">
    <property type="entry name" value="LE_dom"/>
</dbReference>
<dbReference type="InterPro" id="IPR052108">
    <property type="entry name" value="MEGF/SIB"/>
</dbReference>
<dbReference type="InterPro" id="IPR049883">
    <property type="entry name" value="NOTCH1_EGF-like"/>
</dbReference>
<dbReference type="PANTHER" id="PTHR24035">
    <property type="entry name" value="MULTIPLE EPIDERMAL GROWTH FACTOR-LIKE DOMAINS PROTEIN"/>
    <property type="match status" value="1"/>
</dbReference>
<dbReference type="PANTHER" id="PTHR24035:SF109">
    <property type="entry name" value="PROTEIN DRAPER"/>
    <property type="match status" value="1"/>
</dbReference>
<dbReference type="Pfam" id="PF12662">
    <property type="entry name" value="cEGF"/>
    <property type="match status" value="1"/>
</dbReference>
<dbReference type="Pfam" id="PF07645">
    <property type="entry name" value="EGF_CA"/>
    <property type="match status" value="3"/>
</dbReference>
<dbReference type="Pfam" id="PF00053">
    <property type="entry name" value="EGF_laminin"/>
    <property type="match status" value="4"/>
</dbReference>
<dbReference type="Pfam" id="PF14670">
    <property type="entry name" value="FXa_inhibition"/>
    <property type="match status" value="2"/>
</dbReference>
<dbReference type="PRINTS" id="PR00011">
    <property type="entry name" value="EGFLAMININ"/>
</dbReference>
<dbReference type="SMART" id="SM00181">
    <property type="entry name" value="EGF"/>
    <property type="match status" value="31"/>
</dbReference>
<dbReference type="SMART" id="SM00179">
    <property type="entry name" value="EGF_CA"/>
    <property type="match status" value="8"/>
</dbReference>
<dbReference type="SMART" id="SM00180">
    <property type="entry name" value="EGF_Lam"/>
    <property type="match status" value="22"/>
</dbReference>
<dbReference type="SUPFAM" id="SSF57196">
    <property type="entry name" value="EGF/Laminin"/>
    <property type="match status" value="2"/>
</dbReference>
<dbReference type="SUPFAM" id="SSF57184">
    <property type="entry name" value="Growth factor receptor domain"/>
    <property type="match status" value="3"/>
</dbReference>
<dbReference type="PROSITE" id="PS00010">
    <property type="entry name" value="ASX_HYDROXYL"/>
    <property type="match status" value="4"/>
</dbReference>
<dbReference type="PROSITE" id="PS00022">
    <property type="entry name" value="EGF_1"/>
    <property type="match status" value="23"/>
</dbReference>
<dbReference type="PROSITE" id="PS01186">
    <property type="entry name" value="EGF_2"/>
    <property type="match status" value="24"/>
</dbReference>
<dbReference type="PROSITE" id="PS50026">
    <property type="entry name" value="EGF_3"/>
    <property type="match status" value="23"/>
</dbReference>
<dbReference type="PROSITE" id="PS01187">
    <property type="entry name" value="EGF_CA"/>
    <property type="match status" value="4"/>
</dbReference>
<dbReference type="PROSITE" id="PS51041">
    <property type="entry name" value="EMI"/>
    <property type="match status" value="1"/>
</dbReference>
<gene>
    <name type="primary">MEGF6</name>
    <name type="synonym">EGFL3</name>
    <name type="synonym">KIAA0815</name>
</gene>
<comment type="interaction">
    <interactant intactId="EBI-947597">
        <id>O75095</id>
    </interactant>
    <interactant intactId="EBI-708350">
        <id>O15265</id>
        <label>ATXN7</label>
    </interactant>
    <organismsDiffer>false</organismsDiffer>
    <experiments>2</experiments>
</comment>
<comment type="interaction">
    <interactant intactId="EBI-947597">
        <id>O75095</id>
    </interactant>
    <interactant intactId="EBI-766279">
        <id>O00555</id>
        <label>CACNA1A</label>
    </interactant>
    <organismsDiffer>false</organismsDiffer>
    <experiments>2</experiments>
</comment>
<comment type="subcellular location">
    <subcellularLocation>
        <location evidence="8">Secreted</location>
    </subcellularLocation>
</comment>
<comment type="alternative products">
    <event type="alternative splicing"/>
    <isoform>
        <id>O75095-1</id>
        <name>1</name>
        <sequence type="displayed"/>
    </isoform>
    <isoform>
        <id>O75095-2</id>
        <name>2</name>
        <sequence type="described" ref="VSP_037740 VSP_037741 VSP_037742 VSP_037743 VSP_037744"/>
    </isoform>
</comment>
<comment type="sequence caution" evidence="8">
    <conflict type="erroneous initiation">
        <sequence resource="EMBL-CDS" id="BAA32467"/>
    </conflict>
</comment>
<comment type="sequence caution" evidence="8">
    <conflict type="erroneous initiation">
        <sequence resource="EMBL-CDS" id="BAE19678"/>
    </conflict>
    <text>Extended N-terminus.</text>
</comment>
<comment type="sequence caution" evidence="8">
    <conflict type="frameshift">
        <sequence resource="EMBL-CDS" id="BAE19678"/>
    </conflict>
</comment>